<comment type="function">
    <text evidence="2">Component of the ubiquinol-cytochrome c reductase complex (complex III or cytochrome b-c1 complex) that is part of the mitochondrial respiratory chain. The b-c1 complex mediates electron transfer from ubiquinol to cytochrome c. Contributes to the generation of a proton gradient across the mitochondrial membrane that is then used for ATP synthesis.</text>
</comment>
<comment type="cofactor">
    <cofactor evidence="2">
        <name>heme b</name>
        <dbReference type="ChEBI" id="CHEBI:60344"/>
    </cofactor>
    <text evidence="2">Binds 2 heme b groups non-covalently.</text>
</comment>
<comment type="subunit">
    <text evidence="2">The cytochrome bc1 complex contains 11 subunits: 3 respiratory subunits (MT-CYB, CYC1 and UQCRFS1), 2 core proteins (UQCRC1 and UQCRC2) and 6 low-molecular weight proteins (UQCRH/QCR6, UQCRB/QCR7, UQCRQ/QCR8, UQCR10/QCR9, UQCR11/QCR10 and a cleavage product of UQCRFS1). This cytochrome bc1 complex then forms a dimer.</text>
</comment>
<comment type="subcellular location">
    <subcellularLocation>
        <location evidence="2">Mitochondrion inner membrane</location>
        <topology evidence="2">Multi-pass membrane protein</topology>
    </subcellularLocation>
</comment>
<comment type="miscellaneous">
    <text evidence="1">Heme 1 (or BL or b562) is low-potential and absorbs at about 562 nm, and heme 2 (or BH or b566) is high-potential and absorbs at about 566 nm.</text>
</comment>
<comment type="similarity">
    <text evidence="3 4">Belongs to the cytochrome b family.</text>
</comment>
<comment type="caution">
    <text evidence="2">The full-length protein contains only eight transmembrane helices, not nine as predicted by bioinformatics tools.</text>
</comment>
<accession>Q4VUU0</accession>
<sequence>MTNIRKSHPLTKIINSSFIDLPTPSSISSWWNFGSLLGICLAVQILTGLFLAMHYTADTSTAFNSVTHICRDVNYGWILRYMHANGASMFFICLYLHVGRGLYYGSYTYTETWNVGIMLLFAVMATAFMGYVLPWGQMSFWGATVITNLLSAIPYIGTNLVEWIWGGFSVDKATLTRFFAFHFILPFIISAMVMVHLLFLHETGSNNPTGIPSNMDMIPFHPYHTIKDILGLLLMLTALLVLVMFSPDLLGDPDNYIPANPLNTPPHIKPEWYFLFAYAILRSIPNKLGGVLALVLSILILAIIPLLHTSKQRSMMFRPISQCLFWLLVADMLTLTWIGGQPVEHPYIIIGQLASIMYFSIILIFMPLASLAENHLLKW</sequence>
<gene>
    <name type="primary">MT-CYB</name>
    <name type="synonym">COB</name>
    <name type="synonym">CYTB</name>
    <name type="synonym">MTCYB</name>
</gene>
<reference key="1">
    <citation type="journal article" date="2005" name="Mol. Phylogenet. Evol.">
        <title>Molecular phylogeny of funnel-eared bats (Chiroptera: Natalidae), with notes on biogeography and conservation.</title>
        <authorList>
            <person name="Davalos L.M."/>
        </authorList>
    </citation>
    <scope>NUCLEOTIDE SEQUENCE [GENOMIC DNA]</scope>
</reference>
<feature type="chain" id="PRO_0000254737" description="Cytochrome b">
    <location>
        <begin position="1"/>
        <end position="379"/>
    </location>
</feature>
<feature type="transmembrane region" description="Helical" evidence="2">
    <location>
        <begin position="33"/>
        <end position="53"/>
    </location>
</feature>
<feature type="transmembrane region" description="Helical" evidence="2">
    <location>
        <begin position="77"/>
        <end position="98"/>
    </location>
</feature>
<feature type="transmembrane region" description="Helical" evidence="2">
    <location>
        <begin position="113"/>
        <end position="133"/>
    </location>
</feature>
<feature type="transmembrane region" description="Helical" evidence="2">
    <location>
        <begin position="178"/>
        <end position="198"/>
    </location>
</feature>
<feature type="transmembrane region" description="Helical" evidence="2">
    <location>
        <begin position="226"/>
        <end position="246"/>
    </location>
</feature>
<feature type="transmembrane region" description="Helical" evidence="2">
    <location>
        <begin position="288"/>
        <end position="308"/>
    </location>
</feature>
<feature type="transmembrane region" description="Helical" evidence="2">
    <location>
        <begin position="320"/>
        <end position="340"/>
    </location>
</feature>
<feature type="transmembrane region" description="Helical" evidence="2">
    <location>
        <begin position="347"/>
        <end position="367"/>
    </location>
</feature>
<feature type="binding site" description="axial binding residue" evidence="2">
    <location>
        <position position="83"/>
    </location>
    <ligand>
        <name>heme b</name>
        <dbReference type="ChEBI" id="CHEBI:60344"/>
        <label>b562</label>
    </ligand>
    <ligandPart>
        <name>Fe</name>
        <dbReference type="ChEBI" id="CHEBI:18248"/>
    </ligandPart>
</feature>
<feature type="binding site" description="axial binding residue" evidence="2">
    <location>
        <position position="97"/>
    </location>
    <ligand>
        <name>heme b</name>
        <dbReference type="ChEBI" id="CHEBI:60344"/>
        <label>b566</label>
    </ligand>
    <ligandPart>
        <name>Fe</name>
        <dbReference type="ChEBI" id="CHEBI:18248"/>
    </ligandPart>
</feature>
<feature type="binding site" description="axial binding residue" evidence="2">
    <location>
        <position position="182"/>
    </location>
    <ligand>
        <name>heme b</name>
        <dbReference type="ChEBI" id="CHEBI:60344"/>
        <label>b562</label>
    </ligand>
    <ligandPart>
        <name>Fe</name>
        <dbReference type="ChEBI" id="CHEBI:18248"/>
    </ligandPart>
</feature>
<feature type="binding site" description="axial binding residue" evidence="2">
    <location>
        <position position="196"/>
    </location>
    <ligand>
        <name>heme b</name>
        <dbReference type="ChEBI" id="CHEBI:60344"/>
        <label>b566</label>
    </ligand>
    <ligandPart>
        <name>Fe</name>
        <dbReference type="ChEBI" id="CHEBI:18248"/>
    </ligandPart>
</feature>
<feature type="binding site" evidence="2">
    <location>
        <position position="201"/>
    </location>
    <ligand>
        <name>a ubiquinone</name>
        <dbReference type="ChEBI" id="CHEBI:16389"/>
    </ligand>
</feature>
<proteinExistence type="inferred from homology"/>
<protein>
    <recommendedName>
        <fullName>Cytochrome b</fullName>
    </recommendedName>
    <alternativeName>
        <fullName>Complex III subunit 3</fullName>
    </alternativeName>
    <alternativeName>
        <fullName>Complex III subunit III</fullName>
    </alternativeName>
    <alternativeName>
        <fullName>Cytochrome b-c1 complex subunit 3</fullName>
    </alternativeName>
    <alternativeName>
        <fullName>Ubiquinol-cytochrome-c reductase complex cytochrome b subunit</fullName>
    </alternativeName>
</protein>
<dbReference type="EMBL" id="AY621022">
    <property type="protein sequence ID" value="AAU04745.1"/>
    <property type="molecule type" value="Genomic_DNA"/>
</dbReference>
<dbReference type="EMBL" id="AY621023">
    <property type="protein sequence ID" value="AAU04746.1"/>
    <property type="molecule type" value="Genomic_DNA"/>
</dbReference>
<dbReference type="SMR" id="Q4VUU0"/>
<dbReference type="GO" id="GO:0005743">
    <property type="term" value="C:mitochondrial inner membrane"/>
    <property type="evidence" value="ECO:0007669"/>
    <property type="project" value="UniProtKB-SubCell"/>
</dbReference>
<dbReference type="GO" id="GO:0045275">
    <property type="term" value="C:respiratory chain complex III"/>
    <property type="evidence" value="ECO:0007669"/>
    <property type="project" value="InterPro"/>
</dbReference>
<dbReference type="GO" id="GO:0046872">
    <property type="term" value="F:metal ion binding"/>
    <property type="evidence" value="ECO:0007669"/>
    <property type="project" value="UniProtKB-KW"/>
</dbReference>
<dbReference type="GO" id="GO:0008121">
    <property type="term" value="F:ubiquinol-cytochrome-c reductase activity"/>
    <property type="evidence" value="ECO:0007669"/>
    <property type="project" value="InterPro"/>
</dbReference>
<dbReference type="GO" id="GO:0006122">
    <property type="term" value="P:mitochondrial electron transport, ubiquinol to cytochrome c"/>
    <property type="evidence" value="ECO:0007669"/>
    <property type="project" value="TreeGrafter"/>
</dbReference>
<dbReference type="CDD" id="cd00290">
    <property type="entry name" value="cytochrome_b_C"/>
    <property type="match status" value="1"/>
</dbReference>
<dbReference type="CDD" id="cd00284">
    <property type="entry name" value="Cytochrome_b_N"/>
    <property type="match status" value="1"/>
</dbReference>
<dbReference type="FunFam" id="1.20.810.10:FF:000002">
    <property type="entry name" value="Cytochrome b"/>
    <property type="match status" value="1"/>
</dbReference>
<dbReference type="Gene3D" id="1.20.810.10">
    <property type="entry name" value="Cytochrome Bc1 Complex, Chain C"/>
    <property type="match status" value="1"/>
</dbReference>
<dbReference type="InterPro" id="IPR005798">
    <property type="entry name" value="Cyt_b/b6_C"/>
</dbReference>
<dbReference type="InterPro" id="IPR036150">
    <property type="entry name" value="Cyt_b/b6_C_sf"/>
</dbReference>
<dbReference type="InterPro" id="IPR005797">
    <property type="entry name" value="Cyt_b/b6_N"/>
</dbReference>
<dbReference type="InterPro" id="IPR027387">
    <property type="entry name" value="Cytb/b6-like_sf"/>
</dbReference>
<dbReference type="InterPro" id="IPR030689">
    <property type="entry name" value="Cytochrome_b"/>
</dbReference>
<dbReference type="InterPro" id="IPR048260">
    <property type="entry name" value="Cytochrome_b_C_euk/bac"/>
</dbReference>
<dbReference type="InterPro" id="IPR048259">
    <property type="entry name" value="Cytochrome_b_N_euk/bac"/>
</dbReference>
<dbReference type="InterPro" id="IPR016174">
    <property type="entry name" value="Di-haem_cyt_TM"/>
</dbReference>
<dbReference type="PANTHER" id="PTHR19271">
    <property type="entry name" value="CYTOCHROME B"/>
    <property type="match status" value="1"/>
</dbReference>
<dbReference type="PANTHER" id="PTHR19271:SF16">
    <property type="entry name" value="CYTOCHROME B"/>
    <property type="match status" value="1"/>
</dbReference>
<dbReference type="Pfam" id="PF00032">
    <property type="entry name" value="Cytochrom_B_C"/>
    <property type="match status" value="1"/>
</dbReference>
<dbReference type="Pfam" id="PF00033">
    <property type="entry name" value="Cytochrome_B"/>
    <property type="match status" value="1"/>
</dbReference>
<dbReference type="PIRSF" id="PIRSF038885">
    <property type="entry name" value="COB"/>
    <property type="match status" value="1"/>
</dbReference>
<dbReference type="SUPFAM" id="SSF81648">
    <property type="entry name" value="a domain/subunit of cytochrome bc1 complex (Ubiquinol-cytochrome c reductase)"/>
    <property type="match status" value="1"/>
</dbReference>
<dbReference type="SUPFAM" id="SSF81342">
    <property type="entry name" value="Transmembrane di-heme cytochromes"/>
    <property type="match status" value="1"/>
</dbReference>
<dbReference type="PROSITE" id="PS51003">
    <property type="entry name" value="CYTB_CTER"/>
    <property type="match status" value="1"/>
</dbReference>
<dbReference type="PROSITE" id="PS51002">
    <property type="entry name" value="CYTB_NTER"/>
    <property type="match status" value="1"/>
</dbReference>
<geneLocation type="mitochondrion"/>
<keyword id="KW-0249">Electron transport</keyword>
<keyword id="KW-0349">Heme</keyword>
<keyword id="KW-0408">Iron</keyword>
<keyword id="KW-0472">Membrane</keyword>
<keyword id="KW-0479">Metal-binding</keyword>
<keyword id="KW-0496">Mitochondrion</keyword>
<keyword id="KW-0999">Mitochondrion inner membrane</keyword>
<keyword id="KW-0679">Respiratory chain</keyword>
<keyword id="KW-0812">Transmembrane</keyword>
<keyword id="KW-1133">Transmembrane helix</keyword>
<keyword id="KW-0813">Transport</keyword>
<keyword id="KW-0830">Ubiquinone</keyword>
<organism>
    <name type="scientific">Natalus jamaicensis</name>
    <name type="common">Jamaican funnel-eared bat</name>
    <dbReference type="NCBI Taxonomy" id="290563"/>
    <lineage>
        <taxon>Eukaryota</taxon>
        <taxon>Metazoa</taxon>
        <taxon>Chordata</taxon>
        <taxon>Craniata</taxon>
        <taxon>Vertebrata</taxon>
        <taxon>Euteleostomi</taxon>
        <taxon>Mammalia</taxon>
        <taxon>Eutheria</taxon>
        <taxon>Laurasiatheria</taxon>
        <taxon>Chiroptera</taxon>
        <taxon>Yangochiroptera</taxon>
        <taxon>Natalidae</taxon>
        <taxon>Natalus</taxon>
    </lineage>
</organism>
<evidence type="ECO:0000250" key="1"/>
<evidence type="ECO:0000250" key="2">
    <source>
        <dbReference type="UniProtKB" id="P00157"/>
    </source>
</evidence>
<evidence type="ECO:0000255" key="3">
    <source>
        <dbReference type="PROSITE-ProRule" id="PRU00967"/>
    </source>
</evidence>
<evidence type="ECO:0000255" key="4">
    <source>
        <dbReference type="PROSITE-ProRule" id="PRU00968"/>
    </source>
</evidence>
<name>CYB_NATJA</name>